<dbReference type="EMBL" id="AF310076">
    <property type="protein sequence ID" value="AAL26789.1"/>
    <property type="molecule type" value="mRNA"/>
</dbReference>
<dbReference type="RefSeq" id="NP_445765.1">
    <property type="nucleotide sequence ID" value="NM_053313.1"/>
</dbReference>
<dbReference type="SMR" id="Q920E1"/>
<dbReference type="FunCoup" id="Q920E1">
    <property type="interactions" value="150"/>
</dbReference>
<dbReference type="IntAct" id="Q920E1">
    <property type="interactions" value="1"/>
</dbReference>
<dbReference type="MINT" id="Q920E1"/>
<dbReference type="STRING" id="10116.ENSRNOP00000024292"/>
<dbReference type="GlyCosmos" id="Q920E1">
    <property type="glycosylation" value="1 site, No reported glycans"/>
</dbReference>
<dbReference type="GlyGen" id="Q920E1">
    <property type="glycosylation" value="1 site"/>
</dbReference>
<dbReference type="PhosphoSitePlus" id="Q920E1"/>
<dbReference type="PaxDb" id="10116-ENSRNOP00000024292"/>
<dbReference type="GeneID" id="29636"/>
<dbReference type="KEGG" id="rno:29636"/>
<dbReference type="UCSC" id="RGD:620871">
    <property type="organism name" value="rat"/>
</dbReference>
<dbReference type="AGR" id="RGD:620871"/>
<dbReference type="CTD" id="2151"/>
<dbReference type="RGD" id="620871">
    <property type="gene designation" value="F2rl2"/>
</dbReference>
<dbReference type="eggNOG" id="ENOG502QWI1">
    <property type="taxonomic scope" value="Eukaryota"/>
</dbReference>
<dbReference type="InParanoid" id="Q920E1"/>
<dbReference type="OrthoDB" id="40797at9989"/>
<dbReference type="PhylomeDB" id="Q920E1"/>
<dbReference type="Reactome" id="R-RNO-375276">
    <property type="pathway name" value="Peptide ligand-binding receptors"/>
</dbReference>
<dbReference type="Reactome" id="R-RNO-416476">
    <property type="pathway name" value="G alpha (q) signalling events"/>
</dbReference>
<dbReference type="Reactome" id="R-RNO-456926">
    <property type="pathway name" value="Thrombin signalling through proteinase activated receptors (PARs)"/>
</dbReference>
<dbReference type="PRO" id="PR:Q920E1"/>
<dbReference type="Proteomes" id="UP000002494">
    <property type="component" value="Unplaced"/>
</dbReference>
<dbReference type="GO" id="GO:0016324">
    <property type="term" value="C:apical plasma membrane"/>
    <property type="evidence" value="ECO:0000266"/>
    <property type="project" value="RGD"/>
</dbReference>
<dbReference type="GO" id="GO:0005886">
    <property type="term" value="C:plasma membrane"/>
    <property type="evidence" value="ECO:0000318"/>
    <property type="project" value="GO_Central"/>
</dbReference>
<dbReference type="GO" id="GO:0032991">
    <property type="term" value="C:protein-containing complex"/>
    <property type="evidence" value="ECO:0000266"/>
    <property type="project" value="RGD"/>
</dbReference>
<dbReference type="GO" id="GO:0004930">
    <property type="term" value="F:G protein-coupled receptor activity"/>
    <property type="evidence" value="ECO:0000318"/>
    <property type="project" value="GO_Central"/>
</dbReference>
<dbReference type="GO" id="GO:0001648">
    <property type="term" value="F:proteinase-activated receptor activity"/>
    <property type="evidence" value="ECO:0000266"/>
    <property type="project" value="RGD"/>
</dbReference>
<dbReference type="GO" id="GO:0048018">
    <property type="term" value="F:receptor ligand activity"/>
    <property type="evidence" value="ECO:0000266"/>
    <property type="project" value="RGD"/>
</dbReference>
<dbReference type="GO" id="GO:0015057">
    <property type="term" value="F:thrombin-activated receptor activity"/>
    <property type="evidence" value="ECO:0007669"/>
    <property type="project" value="InterPro"/>
</dbReference>
<dbReference type="GO" id="GO:0007596">
    <property type="term" value="P:blood coagulation"/>
    <property type="evidence" value="ECO:0007669"/>
    <property type="project" value="UniProtKB-KW"/>
</dbReference>
<dbReference type="GO" id="GO:0007186">
    <property type="term" value="P:G protein-coupled receptor signaling pathway"/>
    <property type="evidence" value="ECO:0000266"/>
    <property type="project" value="RGD"/>
</dbReference>
<dbReference type="GO" id="GO:1990806">
    <property type="term" value="P:ligand-gated ion channel signaling pathway"/>
    <property type="evidence" value="ECO:0000266"/>
    <property type="project" value="RGD"/>
</dbReference>
<dbReference type="GO" id="GO:0032024">
    <property type="term" value="P:positive regulation of insulin secretion"/>
    <property type="evidence" value="ECO:0000266"/>
    <property type="project" value="RGD"/>
</dbReference>
<dbReference type="FunFam" id="1.20.1070.10:FF:000040">
    <property type="entry name" value="Coagulation factor 2 (thrombin) receptor"/>
    <property type="match status" value="1"/>
</dbReference>
<dbReference type="Gene3D" id="1.20.1070.10">
    <property type="entry name" value="Rhodopsin 7-helix transmembrane proteins"/>
    <property type="match status" value="1"/>
</dbReference>
<dbReference type="InterPro" id="IPR000276">
    <property type="entry name" value="GPCR_Rhodpsn"/>
</dbReference>
<dbReference type="InterPro" id="IPR017452">
    <property type="entry name" value="GPCR_Rhodpsn_7TM"/>
</dbReference>
<dbReference type="InterPro" id="IPR003943">
    <property type="entry name" value="Prot_act_rcpt_3"/>
</dbReference>
<dbReference type="InterPro" id="IPR003912">
    <property type="entry name" value="Protea_act_rcpt"/>
</dbReference>
<dbReference type="PANTHER" id="PTHR24232">
    <property type="entry name" value="G-PROTEIN COUPLED RECEPTOR"/>
    <property type="match status" value="1"/>
</dbReference>
<dbReference type="PANTHER" id="PTHR24232:SF0">
    <property type="entry name" value="PROTEINASE-ACTIVATED RECEPTOR 3"/>
    <property type="match status" value="1"/>
</dbReference>
<dbReference type="Pfam" id="PF00001">
    <property type="entry name" value="7tm_1"/>
    <property type="match status" value="1"/>
</dbReference>
<dbReference type="PRINTS" id="PR00237">
    <property type="entry name" value="GPCRRHODOPSN"/>
</dbReference>
<dbReference type="PRINTS" id="PR01428">
    <property type="entry name" value="PROTEASEAR"/>
</dbReference>
<dbReference type="PRINTS" id="PR01429">
    <property type="entry name" value="PROTEASEAR3"/>
</dbReference>
<dbReference type="SUPFAM" id="SSF81321">
    <property type="entry name" value="Family A G protein-coupled receptor-like"/>
    <property type="match status" value="1"/>
</dbReference>
<dbReference type="PROSITE" id="PS50262">
    <property type="entry name" value="G_PROTEIN_RECEP_F1_2"/>
    <property type="match status" value="1"/>
</dbReference>
<evidence type="ECO:0000250" key="1"/>
<evidence type="ECO:0000255" key="2"/>
<evidence type="ECO:0000255" key="3">
    <source>
        <dbReference type="PROSITE-ProRule" id="PRU00521"/>
    </source>
</evidence>
<sequence length="368" mass="41796">MEMKVLILVGVRLLFLPTTVCQSGMKHVSDNSALTAESFNGNEHSFEEFPLSDIEGWTGATTTIKAKCPEESITTLHVNNATMGYLRSSLSTKVIPAIYILVFVIGVPANIVTLWKLSSRTKSICLVIFHTNLAIADLLFCVTLPFKIAYHLNGNDWVFGEVMCRVTTVAFYGNMYCAILILTCMGINRYLATVHPFTYRKLPKRNFTLLMCGVVWVMVVLYMLPLAILKQEYHLVQPGITTCHDVHDTCESPLPFQFYYFVSLAFFGFLIPFVVSVFCYTTLIHKLNAQDRKWLRYIKAVLLILVIFTICFAPTNIILIIHHANYYYSNTDSLYFMYLIALCLGSLNSCLDPFLYFIMSKIVDQLTS</sequence>
<organism>
    <name type="scientific">Rattus norvegicus</name>
    <name type="common">Rat</name>
    <dbReference type="NCBI Taxonomy" id="10116"/>
    <lineage>
        <taxon>Eukaryota</taxon>
        <taxon>Metazoa</taxon>
        <taxon>Chordata</taxon>
        <taxon>Craniata</taxon>
        <taxon>Vertebrata</taxon>
        <taxon>Euteleostomi</taxon>
        <taxon>Mammalia</taxon>
        <taxon>Eutheria</taxon>
        <taxon>Euarchontoglires</taxon>
        <taxon>Glires</taxon>
        <taxon>Rodentia</taxon>
        <taxon>Myomorpha</taxon>
        <taxon>Muroidea</taxon>
        <taxon>Muridae</taxon>
        <taxon>Murinae</taxon>
        <taxon>Rattus</taxon>
    </lineage>
</organism>
<reference key="1">
    <citation type="submission" date="2000-10" db="EMBL/GenBank/DDBJ databases">
        <title>Cloning of the rat protease activated receptor isoforms 3 and 4.</title>
        <authorList>
            <person name="Chien E.K."/>
            <person name="Marietti S."/>
            <person name="Mendoza J."/>
            <person name="Phillippe M."/>
        </authorList>
    </citation>
    <scope>NUCLEOTIDE SEQUENCE [MRNA]</scope>
    <source>
        <strain>Sprague-Dawley</strain>
        <tissue>Spleen</tissue>
    </source>
</reference>
<accession>Q920E1</accession>
<comment type="function">
    <text>Receptor for activated thrombin coupled to G proteins that stimulate phosphoinositide hydrolysis.</text>
</comment>
<comment type="subunit">
    <text evidence="1">Interacts with INSC/inscuteable and GPSM2.</text>
</comment>
<comment type="subcellular location">
    <subcellularLocation>
        <location>Cell membrane</location>
        <topology>Multi-pass membrane protein</topology>
    </subcellularLocation>
</comment>
<comment type="PTM">
    <text>A proteolytic cleavage generates a new N-terminus that functions as a tethered ligand.</text>
</comment>
<comment type="similarity">
    <text evidence="3">Belongs to the G-protein coupled receptor 1 family.</text>
</comment>
<keyword id="KW-0094">Blood coagulation</keyword>
<keyword id="KW-1003">Cell membrane</keyword>
<keyword id="KW-1015">Disulfide bond</keyword>
<keyword id="KW-0297">G-protein coupled receptor</keyword>
<keyword id="KW-0325">Glycoprotein</keyword>
<keyword id="KW-0356">Hemostasis</keyword>
<keyword id="KW-0472">Membrane</keyword>
<keyword id="KW-0675">Receptor</keyword>
<keyword id="KW-1185">Reference proteome</keyword>
<keyword id="KW-0732">Signal</keyword>
<keyword id="KW-0807">Transducer</keyword>
<keyword id="KW-0812">Transmembrane</keyword>
<keyword id="KW-1133">Transmembrane helix</keyword>
<name>PAR3_RAT</name>
<gene>
    <name type="primary">F2rl2</name>
    <name type="synonym">Par3</name>
</gene>
<proteinExistence type="evidence at transcript level"/>
<protein>
    <recommendedName>
        <fullName>Proteinase-activated receptor 3</fullName>
        <shortName>PAR-3</shortName>
    </recommendedName>
    <alternativeName>
        <fullName>Coagulation factor II receptor-like 2</fullName>
    </alternativeName>
    <alternativeName>
        <fullName>Thrombin receptor-like 2</fullName>
    </alternativeName>
</protein>
<feature type="signal peptide" evidence="2">
    <location>
        <begin position="1"/>
        <end position="21"/>
    </location>
</feature>
<feature type="propeptide" id="PRO_0000012760" description="Removed for receptor activation" evidence="1">
    <location>
        <begin position="22"/>
        <end position="37"/>
    </location>
</feature>
<feature type="chain" id="PRO_0000012761" description="Proteinase-activated receptor 3">
    <location>
        <begin position="38"/>
        <end position="368"/>
    </location>
</feature>
<feature type="topological domain" description="Extracellular" evidence="2">
    <location>
        <begin position="38"/>
        <end position="93"/>
    </location>
</feature>
<feature type="transmembrane region" description="Helical; Name=1" evidence="2">
    <location>
        <begin position="94"/>
        <end position="114"/>
    </location>
</feature>
<feature type="topological domain" description="Cytoplasmic" evidence="2">
    <location>
        <begin position="115"/>
        <end position="123"/>
    </location>
</feature>
<feature type="transmembrane region" description="Helical; Name=2" evidence="2">
    <location>
        <begin position="124"/>
        <end position="144"/>
    </location>
</feature>
<feature type="topological domain" description="Extracellular" evidence="2">
    <location>
        <begin position="145"/>
        <end position="166"/>
    </location>
</feature>
<feature type="transmembrane region" description="Helical; Name=3" evidence="2">
    <location>
        <begin position="167"/>
        <end position="187"/>
    </location>
</feature>
<feature type="topological domain" description="Cytoplasmic" evidence="2">
    <location>
        <begin position="188"/>
        <end position="208"/>
    </location>
</feature>
<feature type="transmembrane region" description="Helical; Name=4" evidence="2">
    <location>
        <begin position="209"/>
        <end position="229"/>
    </location>
</feature>
<feature type="topological domain" description="Extracellular" evidence="2">
    <location>
        <begin position="230"/>
        <end position="257"/>
    </location>
</feature>
<feature type="transmembrane region" description="Helical; Name=5" evidence="2">
    <location>
        <begin position="258"/>
        <end position="278"/>
    </location>
</feature>
<feature type="topological domain" description="Cytoplasmic" evidence="2">
    <location>
        <begin position="279"/>
        <end position="300"/>
    </location>
</feature>
<feature type="transmembrane region" description="Helical; Name=6" evidence="2">
    <location>
        <begin position="301"/>
        <end position="321"/>
    </location>
</feature>
<feature type="topological domain" description="Extracellular" evidence="2">
    <location>
        <begin position="322"/>
        <end position="338"/>
    </location>
</feature>
<feature type="transmembrane region" description="Helical; Name=7" evidence="2">
    <location>
        <begin position="339"/>
        <end position="359"/>
    </location>
</feature>
<feature type="topological domain" description="Cytoplasmic" evidence="2">
    <location>
        <begin position="360"/>
        <end position="368"/>
    </location>
</feature>
<feature type="site" description="Cleavage; by thrombin" evidence="1">
    <location>
        <begin position="37"/>
        <end position="38"/>
    </location>
</feature>
<feature type="glycosylation site" description="N-linked (GlcNAc...) asparagine" evidence="2">
    <location>
        <position position="80"/>
    </location>
</feature>
<feature type="disulfide bond" evidence="3">
    <location>
        <begin position="164"/>
        <end position="243"/>
    </location>
</feature>